<proteinExistence type="inferred from homology"/>
<reference key="1">
    <citation type="journal article" date="2010" name="Genome Biol. Evol.">
        <title>Continuing evolution of Burkholderia mallei through genome reduction and large-scale rearrangements.</title>
        <authorList>
            <person name="Losada L."/>
            <person name="Ronning C.M."/>
            <person name="DeShazer D."/>
            <person name="Woods D."/>
            <person name="Fedorova N."/>
            <person name="Kim H.S."/>
            <person name="Shabalina S.A."/>
            <person name="Pearson T.R."/>
            <person name="Brinkac L."/>
            <person name="Tan P."/>
            <person name="Nandi T."/>
            <person name="Crabtree J."/>
            <person name="Badger J."/>
            <person name="Beckstrom-Sternberg S."/>
            <person name="Saqib M."/>
            <person name="Schutzer S.E."/>
            <person name="Keim P."/>
            <person name="Nierman W.C."/>
        </authorList>
    </citation>
    <scope>NUCLEOTIDE SEQUENCE [LARGE SCALE GENOMIC DNA]</scope>
    <source>
        <strain>NCTC 10247</strain>
    </source>
</reference>
<dbReference type="EMBL" id="CP000548">
    <property type="protein sequence ID" value="ABO07000.1"/>
    <property type="molecule type" value="Genomic_DNA"/>
</dbReference>
<dbReference type="RefSeq" id="WP_004197945.1">
    <property type="nucleotide sequence ID" value="NZ_CP007802.1"/>
</dbReference>
<dbReference type="SMR" id="A3MRX1"/>
<dbReference type="GeneID" id="93126536"/>
<dbReference type="KEGG" id="bmaz:BM44_3024"/>
<dbReference type="KEGG" id="bmn:BMA10247_3495"/>
<dbReference type="PATRIC" id="fig|320389.8.peg.3396"/>
<dbReference type="GO" id="GO:0015935">
    <property type="term" value="C:small ribosomal subunit"/>
    <property type="evidence" value="ECO:0007669"/>
    <property type="project" value="InterPro"/>
</dbReference>
<dbReference type="GO" id="GO:0019843">
    <property type="term" value="F:rRNA binding"/>
    <property type="evidence" value="ECO:0007669"/>
    <property type="project" value="UniProtKB-UniRule"/>
</dbReference>
<dbReference type="GO" id="GO:0003735">
    <property type="term" value="F:structural constituent of ribosome"/>
    <property type="evidence" value="ECO:0007669"/>
    <property type="project" value="InterPro"/>
</dbReference>
<dbReference type="GO" id="GO:0006412">
    <property type="term" value="P:translation"/>
    <property type="evidence" value="ECO:0007669"/>
    <property type="project" value="UniProtKB-UniRule"/>
</dbReference>
<dbReference type="FunFam" id="3.30.160.20:FF:000001">
    <property type="entry name" value="30S ribosomal protein S5"/>
    <property type="match status" value="1"/>
</dbReference>
<dbReference type="FunFam" id="3.30.230.10:FF:000002">
    <property type="entry name" value="30S ribosomal protein S5"/>
    <property type="match status" value="1"/>
</dbReference>
<dbReference type="Gene3D" id="3.30.160.20">
    <property type="match status" value="1"/>
</dbReference>
<dbReference type="Gene3D" id="3.30.230.10">
    <property type="match status" value="1"/>
</dbReference>
<dbReference type="HAMAP" id="MF_01307_B">
    <property type="entry name" value="Ribosomal_uS5_B"/>
    <property type="match status" value="1"/>
</dbReference>
<dbReference type="InterPro" id="IPR020568">
    <property type="entry name" value="Ribosomal_Su5_D2-typ_SF"/>
</dbReference>
<dbReference type="InterPro" id="IPR000851">
    <property type="entry name" value="Ribosomal_uS5"/>
</dbReference>
<dbReference type="InterPro" id="IPR005712">
    <property type="entry name" value="Ribosomal_uS5_bac-type"/>
</dbReference>
<dbReference type="InterPro" id="IPR005324">
    <property type="entry name" value="Ribosomal_uS5_C"/>
</dbReference>
<dbReference type="InterPro" id="IPR013810">
    <property type="entry name" value="Ribosomal_uS5_N"/>
</dbReference>
<dbReference type="InterPro" id="IPR018192">
    <property type="entry name" value="Ribosomal_uS5_N_CS"/>
</dbReference>
<dbReference type="InterPro" id="IPR014721">
    <property type="entry name" value="Ribsml_uS5_D2-typ_fold_subgr"/>
</dbReference>
<dbReference type="NCBIfam" id="TIGR01021">
    <property type="entry name" value="rpsE_bact"/>
    <property type="match status" value="1"/>
</dbReference>
<dbReference type="PANTHER" id="PTHR48277">
    <property type="entry name" value="MITOCHONDRIAL RIBOSOMAL PROTEIN S5"/>
    <property type="match status" value="1"/>
</dbReference>
<dbReference type="PANTHER" id="PTHR48277:SF1">
    <property type="entry name" value="MITOCHONDRIAL RIBOSOMAL PROTEIN S5"/>
    <property type="match status" value="1"/>
</dbReference>
<dbReference type="Pfam" id="PF00333">
    <property type="entry name" value="Ribosomal_S5"/>
    <property type="match status" value="1"/>
</dbReference>
<dbReference type="Pfam" id="PF03719">
    <property type="entry name" value="Ribosomal_S5_C"/>
    <property type="match status" value="1"/>
</dbReference>
<dbReference type="SUPFAM" id="SSF54768">
    <property type="entry name" value="dsRNA-binding domain-like"/>
    <property type="match status" value="1"/>
</dbReference>
<dbReference type="SUPFAM" id="SSF54211">
    <property type="entry name" value="Ribosomal protein S5 domain 2-like"/>
    <property type="match status" value="1"/>
</dbReference>
<dbReference type="PROSITE" id="PS00585">
    <property type="entry name" value="RIBOSOMAL_S5"/>
    <property type="match status" value="1"/>
</dbReference>
<dbReference type="PROSITE" id="PS50881">
    <property type="entry name" value="S5_DSRBD"/>
    <property type="match status" value="1"/>
</dbReference>
<accession>A3MRX1</accession>
<evidence type="ECO:0000255" key="1">
    <source>
        <dbReference type="HAMAP-Rule" id="MF_01307"/>
    </source>
</evidence>
<evidence type="ECO:0000305" key="2"/>
<protein>
    <recommendedName>
        <fullName evidence="1">Small ribosomal subunit protein uS5</fullName>
    </recommendedName>
    <alternativeName>
        <fullName evidence="2">30S ribosomal protein S5</fullName>
    </alternativeName>
</protein>
<comment type="function">
    <text evidence="1">With S4 and S12 plays an important role in translational accuracy.</text>
</comment>
<comment type="function">
    <text evidence="1">Located at the back of the 30S subunit body where it stabilizes the conformation of the head with respect to the body.</text>
</comment>
<comment type="subunit">
    <text evidence="1">Part of the 30S ribosomal subunit. Contacts proteins S4 and S8.</text>
</comment>
<comment type="domain">
    <text>The N-terminal domain interacts with the head of the 30S subunit; the C-terminal domain interacts with the body and contacts protein S4. The interaction surface between S4 and S5 is involved in control of translational fidelity.</text>
</comment>
<comment type="similarity">
    <text evidence="1">Belongs to the universal ribosomal protein uS5 family.</text>
</comment>
<sequence length="172" mass="18150">MAKMQAKVQADERDDGLREKMISVNRVTKVVKGGRILGFAALTVVGDGDGRVGMGKGKAKEVPVAVQKAMEQARRNMFKVPLKNGTLQHEVHGKHGASTVLLAPAKDGTGVIAGGPMRAVFDVMGVQNVVAKSHGSTNPYNLVRATLDGLRKQSTPADIAAKRGKSVEEILG</sequence>
<keyword id="KW-0687">Ribonucleoprotein</keyword>
<keyword id="KW-0689">Ribosomal protein</keyword>
<keyword id="KW-0694">RNA-binding</keyword>
<keyword id="KW-0699">rRNA-binding</keyword>
<name>RS5_BURM7</name>
<feature type="chain" id="PRO_0000323088" description="Small ribosomal subunit protein uS5">
    <location>
        <begin position="1"/>
        <end position="172"/>
    </location>
</feature>
<feature type="domain" description="S5 DRBM" evidence="1">
    <location>
        <begin position="17"/>
        <end position="80"/>
    </location>
</feature>
<gene>
    <name evidence="1" type="primary">rpsE</name>
    <name type="ordered locus">BMA10247_3495</name>
</gene>
<organism>
    <name type="scientific">Burkholderia mallei (strain NCTC 10247)</name>
    <dbReference type="NCBI Taxonomy" id="320389"/>
    <lineage>
        <taxon>Bacteria</taxon>
        <taxon>Pseudomonadati</taxon>
        <taxon>Pseudomonadota</taxon>
        <taxon>Betaproteobacteria</taxon>
        <taxon>Burkholderiales</taxon>
        <taxon>Burkholderiaceae</taxon>
        <taxon>Burkholderia</taxon>
        <taxon>pseudomallei group</taxon>
    </lineage>
</organism>